<dbReference type="EMBL" id="AJ235273">
    <property type="protein sequence ID" value="CAA15154.1"/>
    <property type="molecule type" value="Genomic_DNA"/>
</dbReference>
<dbReference type="PIR" id="B71632">
    <property type="entry name" value="B71632"/>
</dbReference>
<dbReference type="RefSeq" id="NP_221078.1">
    <property type="nucleotide sequence ID" value="NC_000963.1"/>
</dbReference>
<dbReference type="RefSeq" id="WP_004597052.1">
    <property type="nucleotide sequence ID" value="NC_000963.1"/>
</dbReference>
<dbReference type="SMR" id="Q9ZCK6"/>
<dbReference type="STRING" id="272947.gene:17555795"/>
<dbReference type="EnsemblBacteria" id="CAA15154">
    <property type="protein sequence ID" value="CAA15154"/>
    <property type="gene ID" value="CAA15154"/>
</dbReference>
<dbReference type="KEGG" id="rpr:RP723"/>
<dbReference type="PATRIC" id="fig|272947.5.peg.759"/>
<dbReference type="HOGENOM" id="CLU_2384282_0_0_5"/>
<dbReference type="OrthoDB" id="7160726at2"/>
<dbReference type="Proteomes" id="UP000002480">
    <property type="component" value="Chromosome"/>
</dbReference>
<sequence>MKESNSNSVKEDVEGIKKDIESLVSRLRNLKGKTGDILDEQLGNLSSVMEHYKDKGIEKGKANLADLCESTRNNPLRNLAYAFGAGVLLAILMK</sequence>
<accession>Q9ZCK6</accession>
<reference key="1">
    <citation type="journal article" date="1998" name="Nature">
        <title>The genome sequence of Rickettsia prowazekii and the origin of mitochondria.</title>
        <authorList>
            <person name="Andersson S.G.E."/>
            <person name="Zomorodipour A."/>
            <person name="Andersson J.O."/>
            <person name="Sicheritz-Ponten T."/>
            <person name="Alsmark U.C.M."/>
            <person name="Podowski R.M."/>
            <person name="Naeslund A.K."/>
            <person name="Eriksson A.-S."/>
            <person name="Winkler H.H."/>
            <person name="Kurland C.G."/>
        </authorList>
    </citation>
    <scope>NUCLEOTIDE SEQUENCE [LARGE SCALE GENOMIC DNA]</scope>
    <source>
        <strain>Madrid E</strain>
    </source>
</reference>
<proteinExistence type="predicted"/>
<organism>
    <name type="scientific">Rickettsia prowazekii (strain Madrid E)</name>
    <dbReference type="NCBI Taxonomy" id="272947"/>
    <lineage>
        <taxon>Bacteria</taxon>
        <taxon>Pseudomonadati</taxon>
        <taxon>Pseudomonadota</taxon>
        <taxon>Alphaproteobacteria</taxon>
        <taxon>Rickettsiales</taxon>
        <taxon>Rickettsiaceae</taxon>
        <taxon>Rickettsieae</taxon>
        <taxon>Rickettsia</taxon>
        <taxon>typhus group</taxon>
    </lineage>
</organism>
<gene>
    <name type="ordered locus">RP723</name>
</gene>
<name>Y723_RICPR</name>
<protein>
    <recommendedName>
        <fullName>Uncharacterized protein RP723</fullName>
    </recommendedName>
</protein>
<keyword id="KW-1185">Reference proteome</keyword>
<feature type="chain" id="PRO_0000101412" description="Uncharacterized protein RP723">
    <location>
        <begin position="1"/>
        <end position="94"/>
    </location>
</feature>